<comment type="catalytic activity">
    <reaction>
        <text>S-adenosyl-L-methionine + H(+) = S-adenosyl 3-(methylsulfanyl)propylamine + CO2</text>
        <dbReference type="Rhea" id="RHEA:15981"/>
        <dbReference type="ChEBI" id="CHEBI:15378"/>
        <dbReference type="ChEBI" id="CHEBI:16526"/>
        <dbReference type="ChEBI" id="CHEBI:57443"/>
        <dbReference type="ChEBI" id="CHEBI:59789"/>
        <dbReference type="EC" id="4.1.1.50"/>
    </reaction>
</comment>
<comment type="cofactor">
    <cofactor evidence="1">
        <name>pyruvate</name>
        <dbReference type="ChEBI" id="CHEBI:15361"/>
    </cofactor>
    <text evidence="1">Binds 1 pyruvoyl group covalently per subunit.</text>
</comment>
<comment type="pathway">
    <text>Amine and polyamine biosynthesis; S-adenosylmethioninamine biosynthesis; S-adenosylmethioninamine from S-adenosyl-L-methionine: step 1/1.</text>
</comment>
<comment type="PTM">
    <text evidence="1">Is synthesized initially as an inactive proenzyme. Formation of the active enzyme involves a self-maturation process in which the active site pyruvoyl group is generated from an internal serine residue via an autocatalytic post-translational modification. Two non-identical subunits are generated from the proenzyme in this reaction, and the pyruvate is formed at the N-terminus of the alpha chain, which is derived from the carboxyl end of the proenzyme. The post-translation cleavage follows an unusual pathway, termed non-hydrolytic serinolysis, in which the side chain hydroxyl group of the serine supplies its oxygen atom to form the C-terminus of the beta chain, while the remainder of the serine residue undergoes an oxidative deamination to produce ammonia and the pyruvoyl group blocking the N-terminus of the alpha chain (By similarity).</text>
</comment>
<comment type="similarity">
    <text evidence="2">Belongs to the eukaryotic AdoMetDC family.</text>
</comment>
<feature type="chain" id="PRO_0000030021" description="S-adenosylmethionine decarboxylase beta chain" evidence="1">
    <location>
        <begin position="1"/>
        <end position="70"/>
    </location>
</feature>
<feature type="chain" id="PRO_0000030022" description="S-adenosylmethionine decarboxylase alpha chain" evidence="1">
    <location>
        <begin position="71"/>
        <end position="362"/>
    </location>
</feature>
<feature type="active site" evidence="1">
    <location>
        <position position="11"/>
    </location>
</feature>
<feature type="active site" evidence="1">
    <location>
        <position position="14"/>
    </location>
</feature>
<feature type="active site" description="Schiff-base intermediate with substrate; via pyruvic acid" evidence="1">
    <location>
        <position position="71"/>
    </location>
</feature>
<feature type="active site" description="Proton donor; for catalytic activity" evidence="1">
    <location>
        <position position="85"/>
    </location>
</feature>
<feature type="active site" description="Proton acceptor; for processing activity" evidence="1">
    <location>
        <position position="234"/>
    </location>
</feature>
<feature type="active site" description="Proton acceptor; for processing activity" evidence="1">
    <location>
        <position position="247"/>
    </location>
</feature>
<feature type="site" description="Cleavage (non-hydrolytic); by autolysis" evidence="1">
    <location>
        <begin position="70"/>
        <end position="71"/>
    </location>
</feature>
<feature type="modified residue" description="Pyruvic acid (Ser); by autocatalysis" evidence="1">
    <location>
        <position position="71"/>
    </location>
</feature>
<organism>
    <name type="scientific">Ipomoea nil</name>
    <name type="common">Japanese morning glory</name>
    <name type="synonym">Pharbitis nil</name>
    <dbReference type="NCBI Taxonomy" id="35883"/>
    <lineage>
        <taxon>Eukaryota</taxon>
        <taxon>Viridiplantae</taxon>
        <taxon>Streptophyta</taxon>
        <taxon>Embryophyta</taxon>
        <taxon>Tracheophyta</taxon>
        <taxon>Spermatophyta</taxon>
        <taxon>Magnoliopsida</taxon>
        <taxon>eudicotyledons</taxon>
        <taxon>Gunneridae</taxon>
        <taxon>Pentapetalae</taxon>
        <taxon>asterids</taxon>
        <taxon>lamiids</taxon>
        <taxon>Solanales</taxon>
        <taxon>Convolvulaceae</taxon>
        <taxon>Ipomoeeae</taxon>
        <taxon>Ipomoea</taxon>
    </lineage>
</organism>
<protein>
    <recommendedName>
        <fullName>S-adenosylmethionine decarboxylase proenzyme</fullName>
        <shortName>AdoMetDC</shortName>
        <shortName>SAMDC</shortName>
        <ecNumber>4.1.1.50</ecNumber>
    </recommendedName>
    <component>
        <recommendedName>
            <fullName>S-adenosylmethionine decarboxylase alpha chain</fullName>
        </recommendedName>
    </component>
    <component>
        <recommendedName>
            <fullName>S-adenosylmethionine decarboxylase beta chain</fullName>
        </recommendedName>
    </component>
</protein>
<evidence type="ECO:0000250" key="1"/>
<evidence type="ECO:0000305" key="2"/>
<accession>Q96471</accession>
<sequence>MALSTSAIGFEGYEKRLEISFFEAGIFSDPEGRGLRALSKEQLDKVLKPAECTIVSSLSNNEVDSYVLSESSLFVYPYKIIIKTCGTTKLLLSIPPILELADGLSLKVKSVKYTRGSFNFPEVQPYPHRNFSEEVAILDGYFGKLGTGSKAYVMGGAGKQQQWHVYSASAESAENTFPIYTLEMCMTGLDKKSASVFFKTQSSSAAVMTDASGIRKILPGSDICDFDFEPCGYSMNAVEGGTISTIHVTPEDGFSYASFEAMGYDFKDVNLDALIQRVLSCFQPAEFSVALHCDSIGEKLDSVFELDVKGYACGERSYEALGKGGSIMYCGFTSTGSCGSPRSTLLCCWSENEDQEGEKKHF</sequence>
<reference key="1">
    <citation type="online journal article" date="1998" name="Plant Gene Register">
        <title>Cloning and characterization of genomic clone encoding S-adenosylmethionine decarboxylase whose gene expression was regulated by light in Morning glory (Ipomoea nil).</title>
        <authorList>
            <person name="Park W.K."/>
            <person name="Lee S.H."/>
            <person name="Park K.Y."/>
        </authorList>
        <locator>PGR98-014</locator>
    </citation>
    <scope>NUCLEOTIDE SEQUENCE [GENOMIC DNA]</scope>
</reference>
<keyword id="KW-0068">Autocatalytic cleavage</keyword>
<keyword id="KW-0210">Decarboxylase</keyword>
<keyword id="KW-0456">Lyase</keyword>
<keyword id="KW-0620">Polyamine biosynthesis</keyword>
<keyword id="KW-0670">Pyruvate</keyword>
<keyword id="KW-0949">S-adenosyl-L-methionine</keyword>
<keyword id="KW-0704">Schiff base</keyword>
<keyword id="KW-0745">Spermidine biosynthesis</keyword>
<keyword id="KW-0865">Zymogen</keyword>
<dbReference type="EC" id="4.1.1.50"/>
<dbReference type="EMBL" id="U64927">
    <property type="protein sequence ID" value="AAC04611.1"/>
    <property type="molecule type" value="Genomic_DNA"/>
</dbReference>
<dbReference type="SMR" id="Q96471"/>
<dbReference type="UniPathway" id="UPA00331">
    <property type="reaction ID" value="UER00451"/>
</dbReference>
<dbReference type="GO" id="GO:0005829">
    <property type="term" value="C:cytosol"/>
    <property type="evidence" value="ECO:0007669"/>
    <property type="project" value="TreeGrafter"/>
</dbReference>
<dbReference type="GO" id="GO:0004014">
    <property type="term" value="F:adenosylmethionine decarboxylase activity"/>
    <property type="evidence" value="ECO:0007669"/>
    <property type="project" value="UniProtKB-EC"/>
</dbReference>
<dbReference type="GO" id="GO:0008295">
    <property type="term" value="P:spermidine biosynthetic process"/>
    <property type="evidence" value="ECO:0007669"/>
    <property type="project" value="UniProtKB-KW"/>
</dbReference>
<dbReference type="GO" id="GO:0006597">
    <property type="term" value="P:spermine biosynthetic process"/>
    <property type="evidence" value="ECO:0007669"/>
    <property type="project" value="InterPro"/>
</dbReference>
<dbReference type="FunFam" id="3.30.360.50:FF:000001">
    <property type="entry name" value="S-adenosylmethionine decarboxylase proenzyme"/>
    <property type="match status" value="1"/>
</dbReference>
<dbReference type="FunFam" id="3.60.90.10:FF:000002">
    <property type="entry name" value="S-adenosylmethionine decarboxylase proenzyme"/>
    <property type="match status" value="1"/>
</dbReference>
<dbReference type="Gene3D" id="3.30.360.50">
    <property type="entry name" value="S-adenosylmethionine decarboxylase"/>
    <property type="match status" value="1"/>
</dbReference>
<dbReference type="Gene3D" id="3.60.90.10">
    <property type="entry name" value="S-adenosylmethionine decarboxylase"/>
    <property type="match status" value="1"/>
</dbReference>
<dbReference type="InterPro" id="IPR048283">
    <property type="entry name" value="AdoMetDC-like"/>
</dbReference>
<dbReference type="InterPro" id="IPR001985">
    <property type="entry name" value="S-AdoMet_decarboxylase_euk"/>
</dbReference>
<dbReference type="InterPro" id="IPR016067">
    <property type="entry name" value="S-AdoMet_deCO2ase_core"/>
</dbReference>
<dbReference type="InterPro" id="IPR018166">
    <property type="entry name" value="S-AdoMet_deCO2ase_CS"/>
</dbReference>
<dbReference type="NCBIfam" id="TIGR00535">
    <property type="entry name" value="SAM_DCase"/>
    <property type="match status" value="1"/>
</dbReference>
<dbReference type="PANTHER" id="PTHR11570">
    <property type="entry name" value="S-ADENOSYLMETHIONINE DECARBOXYLASE"/>
    <property type="match status" value="1"/>
</dbReference>
<dbReference type="PANTHER" id="PTHR11570:SF36">
    <property type="entry name" value="S-ADENOSYLMETHIONINE DECARBOXYLASE PROENZYME"/>
    <property type="match status" value="1"/>
</dbReference>
<dbReference type="Pfam" id="PF01536">
    <property type="entry name" value="SAM_decarbox"/>
    <property type="match status" value="1"/>
</dbReference>
<dbReference type="PIRSF" id="PIRSF001355">
    <property type="entry name" value="S-AdenosylMet_decarboxylase"/>
    <property type="match status" value="1"/>
</dbReference>
<dbReference type="SUPFAM" id="SSF56276">
    <property type="entry name" value="S-adenosylmethionine decarboxylase"/>
    <property type="match status" value="1"/>
</dbReference>
<dbReference type="PROSITE" id="PS01336">
    <property type="entry name" value="ADOMETDC"/>
    <property type="match status" value="1"/>
</dbReference>
<gene>
    <name type="primary">SAMDC</name>
    <name type="synonym">SDCG1</name>
</gene>
<proteinExistence type="inferred from homology"/>
<name>DCAM_IPONI</name>